<sequence length="223" mass="26158">MRLRNKPWVKEYLEKNDKYLISWDKETKINLSDLFNNKKQPVHLEIGCGKGNFITNHALKESDINFIGMEKEETVVGVALKKTLAEFEQRNKEVTNLKYFNDFAEDLSDIFAPSSIDKIYLNFSDPWPKARHSKKRLTYRTFLDIYANIIKSHGILEFKTDNDGLFAFSLEEIAENKNWELIYQTTDLYSDIEALKNNIPTEYETKFHTAGKNINKLIIKKTF</sequence>
<feature type="chain" id="PRO_0000171347" description="tRNA (guanine-N(7)-)-methyltransferase">
    <location>
        <begin position="1"/>
        <end position="223"/>
    </location>
</feature>
<feature type="active site" evidence="1">
    <location>
        <position position="125"/>
    </location>
</feature>
<feature type="binding site" evidence="2">
    <location>
        <position position="45"/>
    </location>
    <ligand>
        <name>S-adenosyl-L-methionine</name>
        <dbReference type="ChEBI" id="CHEBI:59789"/>
    </ligand>
</feature>
<feature type="binding site" evidence="2">
    <location>
        <position position="70"/>
    </location>
    <ligand>
        <name>S-adenosyl-L-methionine</name>
        <dbReference type="ChEBI" id="CHEBI:59789"/>
    </ligand>
</feature>
<feature type="binding site" evidence="2">
    <location>
        <position position="125"/>
    </location>
    <ligand>
        <name>S-adenosyl-L-methionine</name>
        <dbReference type="ChEBI" id="CHEBI:59789"/>
    </ligand>
</feature>
<feature type="binding site" evidence="2">
    <location>
        <position position="129"/>
    </location>
    <ligand>
        <name>substrate</name>
    </ligand>
</feature>
<feature type="binding site" evidence="2">
    <location>
        <position position="161"/>
    </location>
    <ligand>
        <name>substrate</name>
    </ligand>
</feature>
<feature type="binding site" evidence="2">
    <location>
        <begin position="201"/>
        <end position="204"/>
    </location>
    <ligand>
        <name>substrate</name>
    </ligand>
</feature>
<protein>
    <recommendedName>
        <fullName evidence="2">tRNA (guanine-N(7)-)-methyltransferase</fullName>
        <ecNumber evidence="2">2.1.1.33</ecNumber>
    </recommendedName>
    <alternativeName>
        <fullName evidence="2">tRNA (guanine(46)-N(7))-methyltransferase</fullName>
    </alternativeName>
    <alternativeName>
        <fullName evidence="2">tRNA(m7G46)-methyltransferase</fullName>
    </alternativeName>
</protein>
<dbReference type="EC" id="2.1.1.33" evidence="2"/>
<dbReference type="EMBL" id="AE017263">
    <property type="protein sequence ID" value="AAT75575.1"/>
    <property type="molecule type" value="Genomic_DNA"/>
</dbReference>
<dbReference type="RefSeq" id="WP_011183115.1">
    <property type="nucleotide sequence ID" value="NC_006055.1"/>
</dbReference>
<dbReference type="RefSeq" id="YP_053459.1">
    <property type="nucleotide sequence ID" value="NC_006055.1"/>
</dbReference>
<dbReference type="SMR" id="Q6F1P8"/>
<dbReference type="STRING" id="265311.Mfl218"/>
<dbReference type="PaxDb" id="265311-Mfl218"/>
<dbReference type="EnsemblBacteria" id="AAT75575">
    <property type="protein sequence ID" value="AAT75575"/>
    <property type="gene ID" value="Mfl218"/>
</dbReference>
<dbReference type="GeneID" id="2898269"/>
<dbReference type="KEGG" id="mfl:Mfl218"/>
<dbReference type="PATRIC" id="fig|265311.5.peg.218"/>
<dbReference type="eggNOG" id="COG0220">
    <property type="taxonomic scope" value="Bacteria"/>
</dbReference>
<dbReference type="HOGENOM" id="CLU_050910_2_1_14"/>
<dbReference type="OrthoDB" id="9802090at2"/>
<dbReference type="UniPathway" id="UPA00989"/>
<dbReference type="Proteomes" id="UP000006647">
    <property type="component" value="Chromosome"/>
</dbReference>
<dbReference type="GO" id="GO:0043527">
    <property type="term" value="C:tRNA methyltransferase complex"/>
    <property type="evidence" value="ECO:0007669"/>
    <property type="project" value="TreeGrafter"/>
</dbReference>
<dbReference type="GO" id="GO:0008176">
    <property type="term" value="F:tRNA (guanine(46)-N7)-methyltransferase activity"/>
    <property type="evidence" value="ECO:0007669"/>
    <property type="project" value="UniProtKB-UniRule"/>
</dbReference>
<dbReference type="CDD" id="cd02440">
    <property type="entry name" value="AdoMet_MTases"/>
    <property type="match status" value="1"/>
</dbReference>
<dbReference type="Gene3D" id="3.40.50.150">
    <property type="entry name" value="Vaccinia Virus protein VP39"/>
    <property type="match status" value="1"/>
</dbReference>
<dbReference type="HAMAP" id="MF_01057">
    <property type="entry name" value="tRNA_methyltr_TrmB"/>
    <property type="match status" value="1"/>
</dbReference>
<dbReference type="InterPro" id="IPR029063">
    <property type="entry name" value="SAM-dependent_MTases_sf"/>
</dbReference>
<dbReference type="InterPro" id="IPR003358">
    <property type="entry name" value="tRNA_(Gua-N-7)_MeTrfase_Trmb"/>
</dbReference>
<dbReference type="InterPro" id="IPR055361">
    <property type="entry name" value="tRNA_methyltr_TrmB_bact"/>
</dbReference>
<dbReference type="NCBIfam" id="NF001080">
    <property type="entry name" value="PRK00121.2-2"/>
    <property type="match status" value="1"/>
</dbReference>
<dbReference type="NCBIfam" id="TIGR00091">
    <property type="entry name" value="tRNA (guanosine(46)-N7)-methyltransferase TrmB"/>
    <property type="match status" value="1"/>
</dbReference>
<dbReference type="PANTHER" id="PTHR23417">
    <property type="entry name" value="3-DEOXY-D-MANNO-OCTULOSONIC-ACID TRANSFERASE/TRNA GUANINE-N 7 - -METHYLTRANSFERASE"/>
    <property type="match status" value="1"/>
</dbReference>
<dbReference type="PANTHER" id="PTHR23417:SF14">
    <property type="entry name" value="PENTACOTRIPEPTIDE-REPEAT REGION OF PRORP DOMAIN-CONTAINING PROTEIN"/>
    <property type="match status" value="1"/>
</dbReference>
<dbReference type="Pfam" id="PF02390">
    <property type="entry name" value="Methyltransf_4"/>
    <property type="match status" value="1"/>
</dbReference>
<dbReference type="SUPFAM" id="SSF53335">
    <property type="entry name" value="S-adenosyl-L-methionine-dependent methyltransferases"/>
    <property type="match status" value="1"/>
</dbReference>
<dbReference type="PROSITE" id="PS51625">
    <property type="entry name" value="SAM_MT_TRMB"/>
    <property type="match status" value="1"/>
</dbReference>
<proteinExistence type="inferred from homology"/>
<organism>
    <name type="scientific">Mesoplasma florum (strain ATCC 33453 / NBRC 100688 / NCTC 11704 / L1)</name>
    <name type="common">Acholeplasma florum</name>
    <dbReference type="NCBI Taxonomy" id="265311"/>
    <lineage>
        <taxon>Bacteria</taxon>
        <taxon>Bacillati</taxon>
        <taxon>Mycoplasmatota</taxon>
        <taxon>Mollicutes</taxon>
        <taxon>Entomoplasmatales</taxon>
        <taxon>Entomoplasmataceae</taxon>
        <taxon>Mesoplasma</taxon>
    </lineage>
</organism>
<reference key="1">
    <citation type="submission" date="2004-06" db="EMBL/GenBank/DDBJ databases">
        <authorList>
            <person name="Birren B.W."/>
            <person name="Stange-Thomann N."/>
            <person name="Hafez N."/>
            <person name="DeCaprio D."/>
            <person name="Fisher S."/>
            <person name="Butler J."/>
            <person name="Elkins T."/>
            <person name="Kodira C.D."/>
            <person name="Major J."/>
            <person name="Wang S."/>
            <person name="Nicol R."/>
            <person name="Nusbaum C."/>
        </authorList>
    </citation>
    <scope>NUCLEOTIDE SEQUENCE [LARGE SCALE GENOMIC DNA]</scope>
    <source>
        <strain>ATCC 33453 / NBRC 100688 / NCTC 11704 / L1</strain>
    </source>
</reference>
<accession>Q6F1P8</accession>
<keyword id="KW-0489">Methyltransferase</keyword>
<keyword id="KW-1185">Reference proteome</keyword>
<keyword id="KW-0949">S-adenosyl-L-methionine</keyword>
<keyword id="KW-0808">Transferase</keyword>
<keyword id="KW-0819">tRNA processing</keyword>
<comment type="function">
    <text evidence="2">Catalyzes the formation of N(7)-methylguanine at position 46 (m7G46) in tRNA.</text>
</comment>
<comment type="catalytic activity">
    <reaction evidence="2">
        <text>guanosine(46) in tRNA + S-adenosyl-L-methionine = N(7)-methylguanosine(46) in tRNA + S-adenosyl-L-homocysteine</text>
        <dbReference type="Rhea" id="RHEA:42708"/>
        <dbReference type="Rhea" id="RHEA-COMP:10188"/>
        <dbReference type="Rhea" id="RHEA-COMP:10189"/>
        <dbReference type="ChEBI" id="CHEBI:57856"/>
        <dbReference type="ChEBI" id="CHEBI:59789"/>
        <dbReference type="ChEBI" id="CHEBI:74269"/>
        <dbReference type="ChEBI" id="CHEBI:74480"/>
        <dbReference type="EC" id="2.1.1.33"/>
    </reaction>
</comment>
<comment type="pathway">
    <text evidence="2">tRNA modification; N(7)-methylguanine-tRNA biosynthesis.</text>
</comment>
<comment type="similarity">
    <text evidence="2">Belongs to the class I-like SAM-binding methyltransferase superfamily. TrmB family.</text>
</comment>
<name>TRMB_MESFL</name>
<evidence type="ECO:0000250" key="1"/>
<evidence type="ECO:0000255" key="2">
    <source>
        <dbReference type="HAMAP-Rule" id="MF_01057"/>
    </source>
</evidence>
<gene>
    <name evidence="2" type="primary">trmB</name>
    <name type="ordered locus">Mfl218</name>
</gene>